<proteinExistence type="inferred from homology"/>
<comment type="function">
    <text evidence="1">Catalyzes the formation of 6,7-dimethyl-8-ribityllumazine by condensation of 5-amino-6-(D-ribitylamino)uracil with 3,4-dihydroxy-2-butanone 4-phosphate. This is the penultimate step in the biosynthesis of riboflavin.</text>
</comment>
<comment type="catalytic activity">
    <reaction evidence="1">
        <text>(2S)-2-hydroxy-3-oxobutyl phosphate + 5-amino-6-(D-ribitylamino)uracil = 6,7-dimethyl-8-(1-D-ribityl)lumazine + phosphate + 2 H2O + H(+)</text>
        <dbReference type="Rhea" id="RHEA:26152"/>
        <dbReference type="ChEBI" id="CHEBI:15377"/>
        <dbReference type="ChEBI" id="CHEBI:15378"/>
        <dbReference type="ChEBI" id="CHEBI:15934"/>
        <dbReference type="ChEBI" id="CHEBI:43474"/>
        <dbReference type="ChEBI" id="CHEBI:58201"/>
        <dbReference type="ChEBI" id="CHEBI:58830"/>
        <dbReference type="EC" id="2.5.1.78"/>
    </reaction>
</comment>
<comment type="pathway">
    <text evidence="1">Cofactor biosynthesis; riboflavin biosynthesis; riboflavin from 2-hydroxy-3-oxobutyl phosphate and 5-amino-6-(D-ribitylamino)uracil: step 1/2.</text>
</comment>
<comment type="similarity">
    <text evidence="1">Belongs to the DMRL synthase family.</text>
</comment>
<feature type="chain" id="PRO_1000195505" description="6,7-dimethyl-8-ribityllumazine synthase">
    <location>
        <begin position="1"/>
        <end position="154"/>
    </location>
</feature>
<feature type="active site" description="Proton donor" evidence="1">
    <location>
        <position position="89"/>
    </location>
</feature>
<feature type="binding site" evidence="1">
    <location>
        <position position="23"/>
    </location>
    <ligand>
        <name>5-amino-6-(D-ribitylamino)uracil</name>
        <dbReference type="ChEBI" id="CHEBI:15934"/>
    </ligand>
</feature>
<feature type="binding site" evidence="1">
    <location>
        <begin position="57"/>
        <end position="59"/>
    </location>
    <ligand>
        <name>5-amino-6-(D-ribitylamino)uracil</name>
        <dbReference type="ChEBI" id="CHEBI:15934"/>
    </ligand>
</feature>
<feature type="binding site" evidence="1">
    <location>
        <begin position="81"/>
        <end position="83"/>
    </location>
    <ligand>
        <name>5-amino-6-(D-ribitylamino)uracil</name>
        <dbReference type="ChEBI" id="CHEBI:15934"/>
    </ligand>
</feature>
<feature type="binding site" evidence="1">
    <location>
        <begin position="86"/>
        <end position="87"/>
    </location>
    <ligand>
        <name>(2S)-2-hydroxy-3-oxobutyl phosphate</name>
        <dbReference type="ChEBI" id="CHEBI:58830"/>
    </ligand>
</feature>
<feature type="binding site" evidence="1">
    <location>
        <position position="114"/>
    </location>
    <ligand>
        <name>5-amino-6-(D-ribitylamino)uracil</name>
        <dbReference type="ChEBI" id="CHEBI:15934"/>
    </ligand>
</feature>
<feature type="binding site" evidence="1">
    <location>
        <position position="128"/>
    </location>
    <ligand>
        <name>(2S)-2-hydroxy-3-oxobutyl phosphate</name>
        <dbReference type="ChEBI" id="CHEBI:58830"/>
    </ligand>
</feature>
<name>RISB_NAUPA</name>
<reference key="1">
    <citation type="journal article" date="2009" name="PLoS Genet.">
        <title>Adaptations to submarine hydrothermal environments exemplified by the genome of Nautilia profundicola.</title>
        <authorList>
            <person name="Campbell B.J."/>
            <person name="Smith J.L."/>
            <person name="Hanson T.E."/>
            <person name="Klotz M.G."/>
            <person name="Stein L.Y."/>
            <person name="Lee C.K."/>
            <person name="Wu D."/>
            <person name="Robinson J.M."/>
            <person name="Khouri H.M."/>
            <person name="Eisen J.A."/>
            <person name="Cary S.C."/>
        </authorList>
    </citation>
    <scope>NUCLEOTIDE SEQUENCE [LARGE SCALE GENOMIC DNA]</scope>
    <source>
        <strain>ATCC BAA-1463 / DSM 18972 / AmH</strain>
    </source>
</reference>
<gene>
    <name evidence="1" type="primary">ribH</name>
    <name type="ordered locus">NAMH_1801</name>
</gene>
<sequence>MKTIEGNLQLKGNEKIAIIASRFNHLITDRLVEGAKDAFLRNGGKEENIELILVPGAFELPFGLKRAIKTGKYDGIVCVGAVIRGATPHFDYVAAEATKGIANTTLQADIPVTFGLLTTDTIEQAIERAGTKAGNKGFEAMLGLIEMINLYKEL</sequence>
<protein>
    <recommendedName>
        <fullName evidence="1">6,7-dimethyl-8-ribityllumazine synthase</fullName>
        <shortName evidence="1">DMRL synthase</shortName>
        <shortName evidence="1">LS</shortName>
        <shortName evidence="1">Lumazine synthase</shortName>
        <ecNumber evidence="1">2.5.1.78</ecNumber>
    </recommendedName>
</protein>
<evidence type="ECO:0000255" key="1">
    <source>
        <dbReference type="HAMAP-Rule" id="MF_00178"/>
    </source>
</evidence>
<keyword id="KW-0686">Riboflavin biosynthesis</keyword>
<keyword id="KW-0808">Transferase</keyword>
<dbReference type="EC" id="2.5.1.78" evidence="1"/>
<dbReference type="EMBL" id="CP001279">
    <property type="protein sequence ID" value="ACM93387.1"/>
    <property type="molecule type" value="Genomic_DNA"/>
</dbReference>
<dbReference type="RefSeq" id="WP_015902439.1">
    <property type="nucleotide sequence ID" value="NC_012115.1"/>
</dbReference>
<dbReference type="SMR" id="B9L729"/>
<dbReference type="STRING" id="598659.NAMH_1801"/>
<dbReference type="KEGG" id="nam:NAMH_1801"/>
<dbReference type="eggNOG" id="COG0054">
    <property type="taxonomic scope" value="Bacteria"/>
</dbReference>
<dbReference type="HOGENOM" id="CLU_089358_1_1_7"/>
<dbReference type="OrthoDB" id="9809709at2"/>
<dbReference type="UniPathway" id="UPA00275">
    <property type="reaction ID" value="UER00404"/>
</dbReference>
<dbReference type="Proteomes" id="UP000000448">
    <property type="component" value="Chromosome"/>
</dbReference>
<dbReference type="GO" id="GO:0005829">
    <property type="term" value="C:cytosol"/>
    <property type="evidence" value="ECO:0007669"/>
    <property type="project" value="TreeGrafter"/>
</dbReference>
<dbReference type="GO" id="GO:0009349">
    <property type="term" value="C:riboflavin synthase complex"/>
    <property type="evidence" value="ECO:0007669"/>
    <property type="project" value="InterPro"/>
</dbReference>
<dbReference type="GO" id="GO:0000906">
    <property type="term" value="F:6,7-dimethyl-8-ribityllumazine synthase activity"/>
    <property type="evidence" value="ECO:0007669"/>
    <property type="project" value="UniProtKB-UniRule"/>
</dbReference>
<dbReference type="GO" id="GO:0009231">
    <property type="term" value="P:riboflavin biosynthetic process"/>
    <property type="evidence" value="ECO:0007669"/>
    <property type="project" value="UniProtKB-UniRule"/>
</dbReference>
<dbReference type="CDD" id="cd09209">
    <property type="entry name" value="Lumazine_synthase-I"/>
    <property type="match status" value="1"/>
</dbReference>
<dbReference type="FunFam" id="3.40.50.960:FF:000001">
    <property type="entry name" value="6,7-dimethyl-8-ribityllumazine synthase"/>
    <property type="match status" value="1"/>
</dbReference>
<dbReference type="Gene3D" id="3.40.50.960">
    <property type="entry name" value="Lumazine/riboflavin synthase"/>
    <property type="match status" value="1"/>
</dbReference>
<dbReference type="HAMAP" id="MF_00178">
    <property type="entry name" value="Lumazine_synth"/>
    <property type="match status" value="1"/>
</dbReference>
<dbReference type="InterPro" id="IPR034964">
    <property type="entry name" value="LS"/>
</dbReference>
<dbReference type="InterPro" id="IPR002180">
    <property type="entry name" value="LS/RS"/>
</dbReference>
<dbReference type="InterPro" id="IPR036467">
    <property type="entry name" value="LS/RS_sf"/>
</dbReference>
<dbReference type="NCBIfam" id="TIGR00114">
    <property type="entry name" value="lumazine-synth"/>
    <property type="match status" value="1"/>
</dbReference>
<dbReference type="NCBIfam" id="NF000812">
    <property type="entry name" value="PRK00061.1-4"/>
    <property type="match status" value="1"/>
</dbReference>
<dbReference type="PANTHER" id="PTHR21058:SF0">
    <property type="entry name" value="6,7-DIMETHYL-8-RIBITYLLUMAZINE SYNTHASE"/>
    <property type="match status" value="1"/>
</dbReference>
<dbReference type="PANTHER" id="PTHR21058">
    <property type="entry name" value="6,7-DIMETHYL-8-RIBITYLLUMAZINE SYNTHASE DMRL SYNTHASE LUMAZINE SYNTHASE"/>
    <property type="match status" value="1"/>
</dbReference>
<dbReference type="Pfam" id="PF00885">
    <property type="entry name" value="DMRL_synthase"/>
    <property type="match status" value="1"/>
</dbReference>
<dbReference type="SUPFAM" id="SSF52121">
    <property type="entry name" value="Lumazine synthase"/>
    <property type="match status" value="1"/>
</dbReference>
<organism>
    <name type="scientific">Nautilia profundicola (strain ATCC BAA-1463 / DSM 18972 / AmH)</name>
    <dbReference type="NCBI Taxonomy" id="598659"/>
    <lineage>
        <taxon>Bacteria</taxon>
        <taxon>Pseudomonadati</taxon>
        <taxon>Campylobacterota</taxon>
        <taxon>Epsilonproteobacteria</taxon>
        <taxon>Nautiliales</taxon>
        <taxon>Nautiliaceae</taxon>
        <taxon>Nautilia</taxon>
    </lineage>
</organism>
<accession>B9L729</accession>